<name>CEA2_ECOLX</name>
<sequence>MSGGDGRGHNTGAHSTSGNINGGPTGLGVGGGASDGSGWSSENNPWGGGSGSGIHWGGGSGHGNGGGNGNSGGGSGTGGNLSAVAAPVAFGFPALSTPGAGGLAVSISAGALSAAIADIMAALKGPFKFGLWGVALYGVLPSQIAKDDPNMMSKIVTSLPADDITESPVSSLPLDKATVNVNVRVVDDVKDERQNISVVSGVPMSVPVVDAKPTERPGVFTASIPGAPVLNISVNNSTPEVQTLSPGVTNNTDKDVRPAGFTQGGNTRDAVIRFPKDSGHNAVYVSVSDVLSPDQVKQRQDEENRRQQEWDATHPVEAAERNYERARAELNQANEDVARNQERQAKAVQVYNSRKSELDAANKTLADAIAEIKQFNRFAHDPMAGGHRMWQMAGLKAQRAQTDVNNKQAAFDAAAKEKSDADAALSAAQERRKQKENKEKDAKDKLDKESKRNKPGKATGKGKPVGDKWLDDAGKDSGAPIPDRIADKLRDKEFKNFDDFRKKFWEEVSKDPDLSKQFKGSNKTNIQKGKAPFARKKDQVGGRERFELHHDKPISQDGGVYDMNNIRVTTPKRHIDIHRGK</sequence>
<evidence type="ECO:0000250" key="1"/>
<evidence type="ECO:0000256" key="2">
    <source>
        <dbReference type="SAM" id="MobiDB-lite"/>
    </source>
</evidence>
<evidence type="ECO:0000305" key="3"/>
<evidence type="ECO:0007829" key="4">
    <source>
        <dbReference type="PDB" id="2YSU"/>
    </source>
</evidence>
<evidence type="ECO:0007829" key="5">
    <source>
        <dbReference type="PDB" id="3U43"/>
    </source>
</evidence>
<keyword id="KW-0002">3D-structure</keyword>
<keyword id="KW-0044">Antibiotic</keyword>
<keyword id="KW-0929">Antimicrobial</keyword>
<keyword id="KW-0078">Bacteriocin</keyword>
<keyword id="KW-0255">Endonuclease</keyword>
<keyword id="KW-0378">Hydrolase</keyword>
<keyword id="KW-0479">Metal-binding</keyword>
<keyword id="KW-0540">Nuclease</keyword>
<keyword id="KW-0614">Plasmid</keyword>
<keyword id="KW-0862">Zinc</keyword>
<proteinExistence type="evidence at protein level"/>
<geneLocation type="plasmid">
    <name>ColE2-P9</name>
</geneLocation>
<feature type="chain" id="PRO_0000218680" description="Colicin-E2">
    <location>
        <begin position="1"/>
        <end position="581"/>
    </location>
</feature>
<feature type="region of interest" description="Disordered" evidence="2">
    <location>
        <begin position="1"/>
        <end position="74"/>
    </location>
</feature>
<feature type="region of interest" description="Disordered" evidence="2">
    <location>
        <begin position="242"/>
        <end position="269"/>
    </location>
</feature>
<feature type="region of interest" description="Disordered" evidence="2">
    <location>
        <begin position="293"/>
        <end position="320"/>
    </location>
</feature>
<feature type="region of interest" description="Disordered" evidence="2">
    <location>
        <begin position="421"/>
        <end position="488"/>
    </location>
</feature>
<feature type="region of interest" description="Disordered" evidence="2">
    <location>
        <begin position="513"/>
        <end position="566"/>
    </location>
</feature>
<feature type="compositionally biased region" description="Gly residues" evidence="2">
    <location>
        <begin position="20"/>
        <end position="35"/>
    </location>
</feature>
<feature type="compositionally biased region" description="Low complexity" evidence="2">
    <location>
        <begin position="36"/>
        <end position="45"/>
    </location>
</feature>
<feature type="compositionally biased region" description="Gly residues" evidence="2">
    <location>
        <begin position="46"/>
        <end position="74"/>
    </location>
</feature>
<feature type="compositionally biased region" description="Polar residues" evidence="2">
    <location>
        <begin position="242"/>
        <end position="251"/>
    </location>
</feature>
<feature type="compositionally biased region" description="Basic and acidic residues" evidence="2">
    <location>
        <begin position="296"/>
        <end position="320"/>
    </location>
</feature>
<feature type="compositionally biased region" description="Basic and acidic residues" evidence="2">
    <location>
        <begin position="429"/>
        <end position="452"/>
    </location>
</feature>
<feature type="compositionally biased region" description="Basic and acidic residues" evidence="2">
    <location>
        <begin position="464"/>
        <end position="475"/>
    </location>
</feature>
<feature type="compositionally biased region" description="Polar residues" evidence="2">
    <location>
        <begin position="518"/>
        <end position="527"/>
    </location>
</feature>
<feature type="compositionally biased region" description="Basic and acidic residues" evidence="2">
    <location>
        <begin position="535"/>
        <end position="554"/>
    </location>
</feature>
<feature type="binding site" evidence="1">
    <location>
        <position position="549"/>
    </location>
    <ligand>
        <name>Zn(2+)</name>
        <dbReference type="ChEBI" id="CHEBI:29105"/>
    </ligand>
</feature>
<feature type="binding site" evidence="1">
    <location>
        <position position="574"/>
    </location>
    <ligand>
        <name>Zn(2+)</name>
        <dbReference type="ChEBI" id="CHEBI:29105"/>
    </ligand>
</feature>
<feature type="binding site" evidence="1">
    <location>
        <position position="578"/>
    </location>
    <ligand>
        <name>Zn(2+)</name>
        <dbReference type="ChEBI" id="CHEBI:29105"/>
    </ligand>
</feature>
<feature type="sequence conflict" description="In Ref. 2; CAA25609." evidence="3" ref="2">
    <original>QER</original>
    <variation>RS</variation>
    <location>
        <begin position="429"/>
        <end position="431"/>
    </location>
</feature>
<feature type="sequence conflict" description="In Ref. 2; CAA25609." evidence="3" ref="2">
    <original>A</original>
    <variation>R</variation>
    <location>
        <position position="473"/>
    </location>
</feature>
<feature type="sequence conflict" description="In Ref. 2; CAA25609." evidence="3" ref="2">
    <original>F</original>
    <variation>L</variation>
    <location>
        <position position="504"/>
    </location>
</feature>
<feature type="helix" evidence="4">
    <location>
        <begin position="325"/>
        <end position="375"/>
    </location>
</feature>
<feature type="strand" evidence="4">
    <location>
        <begin position="384"/>
        <end position="386"/>
    </location>
</feature>
<feature type="helix" evidence="4">
    <location>
        <begin position="387"/>
        <end position="440"/>
    </location>
</feature>
<feature type="helix" evidence="5">
    <location>
        <begin position="451"/>
        <end position="453"/>
    </location>
</feature>
<feature type="helix" evidence="5">
    <location>
        <begin position="469"/>
        <end position="474"/>
    </location>
</feature>
<feature type="helix" evidence="5">
    <location>
        <begin position="483"/>
        <end position="489"/>
    </location>
</feature>
<feature type="strand" evidence="5">
    <location>
        <begin position="493"/>
        <end position="496"/>
    </location>
</feature>
<feature type="helix" evidence="5">
    <location>
        <begin position="497"/>
        <end position="509"/>
    </location>
</feature>
<feature type="helix" evidence="5">
    <location>
        <begin position="512"/>
        <end position="515"/>
    </location>
</feature>
<feature type="helix" evidence="5">
    <location>
        <begin position="520"/>
        <end position="527"/>
    </location>
</feature>
<feature type="helix" evidence="5">
    <location>
        <begin position="536"/>
        <end position="538"/>
    </location>
</feature>
<feature type="strand" evidence="5">
    <location>
        <begin position="547"/>
        <end position="552"/>
    </location>
</feature>
<feature type="helix" evidence="5">
    <location>
        <begin position="554"/>
        <end position="556"/>
    </location>
</feature>
<feature type="turn" evidence="5">
    <location>
        <begin position="563"/>
        <end position="565"/>
    </location>
</feature>
<feature type="strand" evidence="5">
    <location>
        <begin position="566"/>
        <end position="569"/>
    </location>
</feature>
<feature type="helix" evidence="5">
    <location>
        <begin position="571"/>
        <end position="578"/>
    </location>
</feature>
<protein>
    <recommendedName>
        <fullName>Colicin-E2</fullName>
        <ecNumber>3.1.-.-</ecNumber>
    </recommendedName>
</protein>
<gene>
    <name type="primary">col</name>
    <name type="synonym">ceaB</name>
</gene>
<dbReference type="EC" id="3.1.-.-"/>
<dbReference type="EMBL" id="M29885">
    <property type="protein sequence ID" value="AAA23068.1"/>
    <property type="molecule type" value="Genomic_DNA"/>
</dbReference>
<dbReference type="EMBL" id="X01163">
    <property type="protein sequence ID" value="CAA25609.1"/>
    <property type="molecule type" value="Genomic_DNA"/>
</dbReference>
<dbReference type="EMBL" id="X02227">
    <property type="protein sequence ID" value="CAA26145.1"/>
    <property type="molecule type" value="Genomic_DNA"/>
</dbReference>
<dbReference type="PIR" id="I40687">
    <property type="entry name" value="NDECE2"/>
</dbReference>
<dbReference type="RefSeq" id="WP_172690082.1">
    <property type="nucleotide sequence ID" value="NZ_KY348421.1"/>
</dbReference>
<dbReference type="PDB" id="2YSU">
    <property type="method" value="X-ray"/>
    <property type="resolution" value="3.50 A"/>
    <property type="chains" value="B=313-447"/>
</dbReference>
<dbReference type="PDB" id="3U43">
    <property type="method" value="X-ray"/>
    <property type="resolution" value="1.72 A"/>
    <property type="chains" value="B=449-581"/>
</dbReference>
<dbReference type="PDBsum" id="2YSU"/>
<dbReference type="PDBsum" id="3U43"/>
<dbReference type="SMR" id="P04419"/>
<dbReference type="TCDB" id="1.C.1.4.1">
    <property type="family name" value="the channel-forming colicin (colicin) family"/>
</dbReference>
<dbReference type="EvolutionaryTrace" id="P04419"/>
<dbReference type="GO" id="GO:0005727">
    <property type="term" value="C:extrachromosomal circular DNA"/>
    <property type="evidence" value="ECO:0007669"/>
    <property type="project" value="InterPro"/>
</dbReference>
<dbReference type="GO" id="GO:0004519">
    <property type="term" value="F:endonuclease activity"/>
    <property type="evidence" value="ECO:0007669"/>
    <property type="project" value="UniProtKB-KW"/>
</dbReference>
<dbReference type="GO" id="GO:0046872">
    <property type="term" value="F:metal ion binding"/>
    <property type="evidence" value="ECO:0007669"/>
    <property type="project" value="UniProtKB-KW"/>
</dbReference>
<dbReference type="GO" id="GO:0042742">
    <property type="term" value="P:defense response to bacterium"/>
    <property type="evidence" value="ECO:0007669"/>
    <property type="project" value="UniProtKB-KW"/>
</dbReference>
<dbReference type="GO" id="GO:0031640">
    <property type="term" value="P:killing of cells of another organism"/>
    <property type="evidence" value="ECO:0007669"/>
    <property type="project" value="UniProtKB-KW"/>
</dbReference>
<dbReference type="FunFam" id="3.90.540.10:FF:000001">
    <property type="entry name" value="Colicin-E9"/>
    <property type="match status" value="1"/>
</dbReference>
<dbReference type="Gene3D" id="3.90.540.10">
    <property type="entry name" value="Colicin/pyocin, DNase domain"/>
    <property type="match status" value="1"/>
</dbReference>
<dbReference type="Gene3D" id="1.10.287.620">
    <property type="entry name" value="Helix Hairpins"/>
    <property type="match status" value="1"/>
</dbReference>
<dbReference type="Gene3D" id="1.20.5.740">
    <property type="entry name" value="Single helix bin"/>
    <property type="match status" value="1"/>
</dbReference>
<dbReference type="InterPro" id="IPR024575">
    <property type="entry name" value="Cloacin_colicin"/>
</dbReference>
<dbReference type="InterPro" id="IPR037146">
    <property type="entry name" value="Colicin/pyocin_DNase_dom_sf"/>
</dbReference>
<dbReference type="InterPro" id="IPR024566">
    <property type="entry name" value="Colicin_R_dom"/>
</dbReference>
<dbReference type="InterPro" id="IPR044925">
    <property type="entry name" value="His-Me_finger_sf"/>
</dbReference>
<dbReference type="InterPro" id="IPR003615">
    <property type="entry name" value="HNH_nuc"/>
</dbReference>
<dbReference type="InterPro" id="IPR016128">
    <property type="entry name" value="Pyosin/cloacin_T_dom"/>
</dbReference>
<dbReference type="InterPro" id="IPR036302">
    <property type="entry name" value="Pyosin/cloacin_T_dom_sf"/>
</dbReference>
<dbReference type="Pfam" id="PF03515">
    <property type="entry name" value="Cloacin"/>
    <property type="match status" value="1"/>
</dbReference>
<dbReference type="Pfam" id="PF21431">
    <property type="entry name" value="Col-Pyo_DNase"/>
    <property type="match status" value="1"/>
</dbReference>
<dbReference type="Pfam" id="PF11570">
    <property type="entry name" value="E2R135"/>
    <property type="match status" value="1"/>
</dbReference>
<dbReference type="PRINTS" id="PR01295">
    <property type="entry name" value="CLOACIN"/>
</dbReference>
<dbReference type="SMART" id="SM00507">
    <property type="entry name" value="HNHc"/>
    <property type="match status" value="1"/>
</dbReference>
<dbReference type="SUPFAM" id="SSF69369">
    <property type="entry name" value="Cloacin translocation domain"/>
    <property type="match status" value="1"/>
</dbReference>
<dbReference type="SUPFAM" id="SSF69985">
    <property type="entry name" value="Colicin E3 receptor domain"/>
    <property type="match status" value="1"/>
</dbReference>
<dbReference type="SUPFAM" id="SSF54060">
    <property type="entry name" value="His-Me finger endonucleases"/>
    <property type="match status" value="1"/>
</dbReference>
<organism>
    <name type="scientific">Escherichia coli</name>
    <dbReference type="NCBI Taxonomy" id="562"/>
    <lineage>
        <taxon>Bacteria</taxon>
        <taxon>Pseudomonadati</taxon>
        <taxon>Pseudomonadota</taxon>
        <taxon>Gammaproteobacteria</taxon>
        <taxon>Enterobacterales</taxon>
        <taxon>Enterobacteriaceae</taxon>
        <taxon>Escherichia</taxon>
    </lineage>
</organism>
<accession>P04419</accession>
<comment type="function">
    <text>This plasmid-coded bactericidal protein is an endonuclease active on both single- and double-stranded DNA but with undefined specificity.</text>
</comment>
<comment type="function">
    <text>Colicins are polypeptide toxins produced by and active against E.coli and closely related bacteria.</text>
</comment>
<comment type="similarity">
    <text evidence="3">Belongs to the colicin/pyosin nuclease family.</text>
</comment>
<reference key="1">
    <citation type="journal article" date="1985" name="Mol. Gen. Genet.">
        <title>Molecular characterisation of the colicin E2 operon and identification of its products.</title>
        <authorList>
            <person name="Cole S.T."/>
            <person name="Saint-Joanis B."/>
            <person name="Pugsley A.P."/>
        </authorList>
    </citation>
    <scope>NUCLEOTIDE SEQUENCE [GENOMIC DNA]</scope>
</reference>
<reference key="2">
    <citation type="journal article" date="1984" name="Nucleic Acids Res.">
        <title>Comparative nucleotide sequences encoding the immunity proteins and the carboxyl-terminal peptides of colicins E2 and E3.</title>
        <authorList>
            <person name="Lau P.C.K."/>
            <person name="Rowsome R.W."/>
            <person name="Zuker M."/>
            <person name="Visentin L.P."/>
        </authorList>
    </citation>
    <scope>NUCLEOTIDE SEQUENCE [GENOMIC DNA] OF 377-581</scope>
</reference>
<reference key="3">
    <citation type="journal article" date="1985" name="Nucleic Acids Res.">
        <title>Structure and expression of the ColE2-P9 immunity gene.</title>
        <authorList>
            <person name="Masaki H."/>
            <person name="Toba M."/>
            <person name="Ohta T."/>
        </authorList>
    </citation>
    <scope>NUCLEOTIDE SEQUENCE [GENOMIC DNA] OF 478-581</scope>
</reference>